<protein>
    <recommendedName>
        <fullName>Regulator of G-protein signaling 16</fullName>
        <shortName evidence="5">poRGS16</shortName>
    </recommendedName>
</protein>
<evidence type="ECO:0000250" key="1">
    <source>
        <dbReference type="UniProtKB" id="O15492"/>
    </source>
</evidence>
<evidence type="ECO:0000250" key="2">
    <source>
        <dbReference type="UniProtKB" id="P97428"/>
    </source>
</evidence>
<evidence type="ECO:0000255" key="3">
    <source>
        <dbReference type="PROSITE-ProRule" id="PRU00171"/>
    </source>
</evidence>
<evidence type="ECO:0000269" key="4">
    <source>
    </source>
</evidence>
<evidence type="ECO:0000303" key="5">
    <source>
    </source>
</evidence>
<evidence type="ECO:0000305" key="6"/>
<keyword id="KW-0343">GTPase activation</keyword>
<keyword id="KW-0945">Host-virus interaction</keyword>
<keyword id="KW-0449">Lipoprotein</keyword>
<keyword id="KW-0472">Membrane</keyword>
<keyword id="KW-0564">Palmitate</keyword>
<keyword id="KW-0597">Phosphoprotein</keyword>
<keyword id="KW-1185">Reference proteome</keyword>
<keyword id="KW-0734">Signal transduction inhibitor</keyword>
<feature type="chain" id="PRO_0000445695" description="Regulator of G-protein signaling 16">
    <location>
        <begin position="1"/>
        <end position="200"/>
    </location>
</feature>
<feature type="domain" description="RGS" evidence="3">
    <location>
        <begin position="65"/>
        <end position="181"/>
    </location>
</feature>
<feature type="modified residue" description="Phosphotyrosine" evidence="1">
    <location>
        <position position="168"/>
    </location>
</feature>
<feature type="modified residue" description="Phosphotyrosine" evidence="1">
    <location>
        <position position="177"/>
    </location>
</feature>
<feature type="lipid moiety-binding region" description="S-palmitoyl cysteine" evidence="2">
    <location>
        <position position="2"/>
    </location>
</feature>
<feature type="lipid moiety-binding region" description="S-palmitoyl cysteine" evidence="2">
    <location>
        <position position="12"/>
    </location>
</feature>
<feature type="sequence conflict" description="In Ref. 2; ABX71210." evidence="6" ref="2">
    <original>T</original>
    <variation>S</variation>
    <location>
        <position position="148"/>
    </location>
</feature>
<feature type="sequence conflict" description="In Ref. 2; ABX71210." evidence="6" ref="2">
    <original>A</original>
    <variation>ASA</variation>
    <location>
        <position position="184"/>
    </location>
</feature>
<feature type="sequence conflict" description="In Ref. 2; ABX71210." evidence="6" ref="2">
    <original>PSSG</original>
    <variation>ASSS</variation>
    <location>
        <begin position="189"/>
        <end position="192"/>
    </location>
</feature>
<organism>
    <name type="scientific">Sus scrofa</name>
    <name type="common">Pig</name>
    <dbReference type="NCBI Taxonomy" id="9823"/>
    <lineage>
        <taxon>Eukaryota</taxon>
        <taxon>Metazoa</taxon>
        <taxon>Chordata</taxon>
        <taxon>Craniata</taxon>
        <taxon>Vertebrata</taxon>
        <taxon>Euteleostomi</taxon>
        <taxon>Mammalia</taxon>
        <taxon>Eutheria</taxon>
        <taxon>Laurasiatheria</taxon>
        <taxon>Artiodactyla</taxon>
        <taxon>Suina</taxon>
        <taxon>Suidae</taxon>
        <taxon>Sus</taxon>
    </lineage>
</organism>
<comment type="function">
    <text evidence="2">Regulates G protein-coupled receptor signaling cascades. Inhibits signal transduction by increasing the GTPase activity of G protein alpha subunits, thereby driving them into their inactive GDP-bound form. Plays an important role in the phototransduction cascade by regulating the lifetime and effective concentration of activated transducin alpha. May regulate extra and intracellular mitogenic signals.</text>
</comment>
<comment type="function">
    <text evidence="4">(Microbial infection) Gets inactivated and/or degraded by porcine circovirus 2 ORF3 protein, leading to enhanced expression of IL-6 and IL-8 in infected lymphocytes. This would explain chronic inflammatory response of PCV2 infected pigs.</text>
</comment>
<comment type="subunit">
    <text evidence="1 2">Interacts with GNAI1 and GNAQ. Interacts with GNAI3, GNAI3 and GNAO1.</text>
</comment>
<comment type="subunit">
    <text evidence="4">(Microbial infection) Interacts with porcine circovirus 2 ORF3 protein.</text>
</comment>
<comment type="subcellular location">
    <subcellularLocation>
        <location evidence="2">Membrane</location>
        <topology evidence="2">Lipid-anchor</topology>
    </subcellularLocation>
</comment>
<comment type="PTM">
    <text evidence="2">Palmitoylated on Cys-2 and/or Cys-12.</text>
</comment>
<comment type="PTM">
    <text evidence="1">Phosphorylated. Phosphorylation at Tyr-168 by EGFR enhances GTPase accelerating (GAP) activity toward GNAI1.</text>
</comment>
<accession>F1S668</accession>
<accession>A9QVL1</accession>
<dbReference type="EMBL" id="AEMK02000070">
    <property type="status" value="NOT_ANNOTATED_CDS"/>
    <property type="molecule type" value="Genomic_DNA"/>
</dbReference>
<dbReference type="EMBL" id="EU271873">
    <property type="protein sequence ID" value="ABX71210.1"/>
    <property type="molecule type" value="mRNA"/>
</dbReference>
<dbReference type="RefSeq" id="NP_001106488.1">
    <property type="nucleotide sequence ID" value="NM_001113017.1"/>
</dbReference>
<dbReference type="RefSeq" id="XP_013835375.1">
    <property type="nucleotide sequence ID" value="XM_013979921.1"/>
</dbReference>
<dbReference type="RefSeq" id="XP_020919422.1">
    <property type="nucleotide sequence ID" value="XM_021063763.1"/>
</dbReference>
<dbReference type="SMR" id="F1S668"/>
<dbReference type="FunCoup" id="F1S668">
    <property type="interactions" value="51"/>
</dbReference>
<dbReference type="STRING" id="9823.ENSSSCP00000064836"/>
<dbReference type="PaxDb" id="9823-ENSSSCP00000016486"/>
<dbReference type="Ensembl" id="ENSSSCT00000016940.5">
    <property type="protein sequence ID" value="ENSSSCP00000016486.3"/>
    <property type="gene ID" value="ENSSSCG00000015550.5"/>
</dbReference>
<dbReference type="Ensembl" id="ENSSSCT00035035903.1">
    <property type="protein sequence ID" value="ENSSSCP00035014270.1"/>
    <property type="gene ID" value="ENSSSCG00035027152.1"/>
</dbReference>
<dbReference type="Ensembl" id="ENSSSCT00065005655.1">
    <property type="protein sequence ID" value="ENSSSCP00065002514.1"/>
    <property type="gene ID" value="ENSSSCG00065004108.1"/>
</dbReference>
<dbReference type="Ensembl" id="ENSSSCT00090044134">
    <property type="protein sequence ID" value="ENSSSCP00090027535"/>
    <property type="gene ID" value="ENSSSCG00090024912"/>
</dbReference>
<dbReference type="Ensembl" id="ENSSSCT00110028246">
    <property type="protein sequence ID" value="ENSSSCP00110018891"/>
    <property type="gene ID" value="ENSSSCG00110014902"/>
</dbReference>
<dbReference type="Ensembl" id="ENSSSCT00115005777">
    <property type="protein sequence ID" value="ENSSSCP00115005372"/>
    <property type="gene ID" value="ENSSSCG00115003427"/>
</dbReference>
<dbReference type="Ensembl" id="ENSSSCT00130044926">
    <property type="protein sequence ID" value="ENSSSCP00130031539"/>
    <property type="gene ID" value="ENSSSCG00130023278"/>
</dbReference>
<dbReference type="GeneID" id="397544"/>
<dbReference type="CTD" id="6004"/>
<dbReference type="VGNC" id="VGNC:92262">
    <property type="gene designation" value="RGS16"/>
</dbReference>
<dbReference type="eggNOG" id="KOG3589">
    <property type="taxonomic scope" value="Eukaryota"/>
</dbReference>
<dbReference type="GeneTree" id="ENSGT00940000154304"/>
<dbReference type="HOGENOM" id="CLU_059863_3_4_1"/>
<dbReference type="InParanoid" id="F1S668"/>
<dbReference type="OMA" id="KTHTLME"/>
<dbReference type="OrthoDB" id="196547at2759"/>
<dbReference type="TreeFam" id="TF315837"/>
<dbReference type="Reactome" id="R-SSC-416476">
    <property type="pathway name" value="G alpha (q) signalling events"/>
</dbReference>
<dbReference type="Reactome" id="R-SSC-418594">
    <property type="pathway name" value="G alpha (i) signalling events"/>
</dbReference>
<dbReference type="Reactome" id="R-SSC-418597">
    <property type="pathway name" value="G alpha (z) signalling events"/>
</dbReference>
<dbReference type="Proteomes" id="UP000008227">
    <property type="component" value="Chromosome 9"/>
</dbReference>
<dbReference type="Proteomes" id="UP000314985">
    <property type="component" value="Unplaced"/>
</dbReference>
<dbReference type="Proteomes" id="UP000694570">
    <property type="component" value="Unplaced"/>
</dbReference>
<dbReference type="Proteomes" id="UP000694571">
    <property type="component" value="Unplaced"/>
</dbReference>
<dbReference type="Proteomes" id="UP000694720">
    <property type="component" value="Unplaced"/>
</dbReference>
<dbReference type="Proteomes" id="UP000694722">
    <property type="component" value="Unplaced"/>
</dbReference>
<dbReference type="Proteomes" id="UP000694723">
    <property type="component" value="Unplaced"/>
</dbReference>
<dbReference type="Proteomes" id="UP000694724">
    <property type="component" value="Unplaced"/>
</dbReference>
<dbReference type="Proteomes" id="UP000694725">
    <property type="component" value="Unplaced"/>
</dbReference>
<dbReference type="Proteomes" id="UP000694726">
    <property type="component" value="Unplaced"/>
</dbReference>
<dbReference type="Proteomes" id="UP000694727">
    <property type="component" value="Unplaced"/>
</dbReference>
<dbReference type="Proteomes" id="UP000694728">
    <property type="component" value="Unplaced"/>
</dbReference>
<dbReference type="Bgee" id="ENSSSCG00000015550">
    <property type="expression patterns" value="Expressed in dorsal plus ventral thalamus and 41 other cell types or tissues"/>
</dbReference>
<dbReference type="ExpressionAtlas" id="F1S668">
    <property type="expression patterns" value="baseline and differential"/>
</dbReference>
<dbReference type="GO" id="GO:0005737">
    <property type="term" value="C:cytoplasm"/>
    <property type="evidence" value="ECO:0007669"/>
    <property type="project" value="Ensembl"/>
</dbReference>
<dbReference type="GO" id="GO:0016020">
    <property type="term" value="C:membrane"/>
    <property type="evidence" value="ECO:0007669"/>
    <property type="project" value="UniProtKB-SubCell"/>
</dbReference>
<dbReference type="GO" id="GO:0005096">
    <property type="term" value="F:GTPase activator activity"/>
    <property type="evidence" value="ECO:0007669"/>
    <property type="project" value="UniProtKB-KW"/>
</dbReference>
<dbReference type="GO" id="GO:0007186">
    <property type="term" value="P:G protein-coupled receptor signaling pathway"/>
    <property type="evidence" value="ECO:0007669"/>
    <property type="project" value="Ensembl"/>
</dbReference>
<dbReference type="GO" id="GO:0009968">
    <property type="term" value="P:negative regulation of signal transduction"/>
    <property type="evidence" value="ECO:0007669"/>
    <property type="project" value="UniProtKB-KW"/>
</dbReference>
<dbReference type="CDD" id="cd08710">
    <property type="entry name" value="RGS_RGS16"/>
    <property type="match status" value="1"/>
</dbReference>
<dbReference type="FunFam" id="1.10.167.10:FF:000001">
    <property type="entry name" value="Putative regulator of g-protein signaling 12"/>
    <property type="match status" value="1"/>
</dbReference>
<dbReference type="FunFam" id="1.10.196.10:FF:000001">
    <property type="entry name" value="Regulator of G-protein signaling 8"/>
    <property type="match status" value="1"/>
</dbReference>
<dbReference type="Gene3D" id="1.10.196.10">
    <property type="match status" value="1"/>
</dbReference>
<dbReference type="Gene3D" id="1.10.167.10">
    <property type="entry name" value="Regulator of G-protein Signalling 4, domain 2"/>
    <property type="match status" value="1"/>
</dbReference>
<dbReference type="InterPro" id="IPR016137">
    <property type="entry name" value="RGS"/>
</dbReference>
<dbReference type="InterPro" id="IPR036305">
    <property type="entry name" value="RGS_sf"/>
</dbReference>
<dbReference type="InterPro" id="IPR024066">
    <property type="entry name" value="RGS_subdom1/3"/>
</dbReference>
<dbReference type="InterPro" id="IPR044926">
    <property type="entry name" value="RGS_subdomain_2"/>
</dbReference>
<dbReference type="PANTHER" id="PTHR10845">
    <property type="entry name" value="REGULATOR OF G PROTEIN SIGNALING"/>
    <property type="match status" value="1"/>
</dbReference>
<dbReference type="PANTHER" id="PTHR10845:SF187">
    <property type="entry name" value="REGULATOR OF G-PROTEIN SIGNALING 16"/>
    <property type="match status" value="1"/>
</dbReference>
<dbReference type="Pfam" id="PF00615">
    <property type="entry name" value="RGS"/>
    <property type="match status" value="1"/>
</dbReference>
<dbReference type="PRINTS" id="PR01301">
    <property type="entry name" value="RGSPROTEIN"/>
</dbReference>
<dbReference type="SMART" id="SM00315">
    <property type="entry name" value="RGS"/>
    <property type="match status" value="1"/>
</dbReference>
<dbReference type="SUPFAM" id="SSF48097">
    <property type="entry name" value="Regulator of G-protein signaling, RGS"/>
    <property type="match status" value="1"/>
</dbReference>
<dbReference type="PROSITE" id="PS50132">
    <property type="entry name" value="RGS"/>
    <property type="match status" value="1"/>
</dbReference>
<proteinExistence type="evidence at protein level"/>
<sequence>MCRTLAAFPTTCLERAKEFKTRLGIFLHKSELGSDPASVGKFEWGSKHSKDGRNFSEDVLGWRESFDLLLSSKNGVAAFHTFLKTEFSEENLEFWLACEEFKKLRSATKLASRAHRIFEEFIRSEAPKEVNLDHETRELTRTNLQAATATCFDVAQGKTRTLMEKDSYPRFLKSPAYRDLAAQAASASPSSGSPAEPSHT</sequence>
<gene>
    <name type="primary">RGS16</name>
</gene>
<name>RGS16_PIG</name>
<reference key="1">
    <citation type="submission" date="2009-11" db="EMBL/GenBank/DDBJ databases">
        <authorList>
            <consortium name="Porcine genome sequencing project"/>
        </authorList>
    </citation>
    <scope>NUCLEOTIDE SEQUENCE [LARGE SCALE GENOMIC DNA]</scope>
    <source>
        <strain>Duroc</strain>
    </source>
</reference>
<reference key="2">
    <citation type="journal article" date="2009" name="J. Gen. Virol.">
        <title>Regulator of G protein signalling 16 is a target for a porcine circovirus type 2 protein.</title>
        <authorList>
            <person name="Timmusk S."/>
            <person name="Merlot E."/>
            <person name="Lovgren T."/>
            <person name="Jarvekulg L."/>
            <person name="Berg M."/>
            <person name="Fossum C."/>
        </authorList>
    </citation>
    <scope>NUCLEOTIDE SEQUENCE [GENOMIC DNA]</scope>
    <scope>INTERACTION WITH PCV2 ORF3 (MICROBIAL INFECTION)</scope>
</reference>
<reference key="3">
    <citation type="journal article" date="2015" name="J. Gen. Virol.">
        <title>The ORF3 protein of porcine circovirus type 2 promotes secretion of IL-6 and IL-8 in porcine epithelial cells by facilitating proteasomal degradation of regulator of G protein signalling 16 through physical interaction.</title>
        <authorList>
            <person name="Choi C.Y."/>
            <person name="Rho S.B."/>
            <person name="Kim H.S."/>
            <person name="Han J."/>
            <person name="Bae J."/>
            <person name="Lee S.J."/>
            <person name="Jung W.W."/>
            <person name="Chun T."/>
        </authorList>
    </citation>
    <scope>FUNCTION (MICROBIAL INFECTION)</scope>
    <scope>INTERACTION WITH PCV2 ORF3 (MICROBIAL INFECTION)</scope>
</reference>